<proteinExistence type="evidence at protein level"/>
<sequence length="661" mass="75035">MEMTEMTGVSLKRGALVVEDNDSGVPVEETKKQKLSECSLTKGQDGLQNDFLSISEDVPRPPDTVSTGKGGKNSEAQLEDEEEEEEDGLSEECEEEESESFADMMKHGLTEADVGITKFVSSHQGFSGILKERYSDFVVHEIGKDGRISHLNDLSIPVDEEDPSEDIFTVLTAEEKQRLEELQLFKNKETSVAIEVIEDTKEKRTIIHQAIKSLFPGLETKTEDREGKKYIVAYHAAGKKALANPRKHSWPKSRGSYCHFVLYKENKDTMDAINVLSKYLRVKPNIFSYMGTKDKRAITVQEIAVLKITAQRLAHLNKCLMNFKLGNFSYQKNPLKLGELQGNHFTVVLRNITGTDDQVQQAMNSLKEIGFINYYGMQRFGTTAVPTYQVGRAILQNSWTEVMDLILKPRSGAEKGYLVKCREEWAKTKDPTAALRKLPVKRCVEGQLLRGLSKYGMKNIVSAFGIIPRNNRLMYIHSYQSYVWNNMVSKRIEDYGLKPVPGDLVLKGATATYIEEDDVNNYSIHDVVMPLPGFDVIYPKHKIQEAYREMLTADNLDIDNMRHKIRDYSLSGAYRKIIIRPQNVSWEVVAYDDPKIPLFNTDVDNLEGKTPPVFASEGKYRALKMDFSLPPSTYATMAIREVLKMDTSIKNQTQLNTTWLR</sequence>
<evidence type="ECO:0000255" key="1">
    <source>
        <dbReference type="PROSITE-ProRule" id="PRU00342"/>
    </source>
</evidence>
<evidence type="ECO:0000256" key="2">
    <source>
        <dbReference type="SAM" id="MobiDB-lite"/>
    </source>
</evidence>
<evidence type="ECO:0000269" key="3">
    <source>
    </source>
</evidence>
<evidence type="ECO:0000269" key="4">
    <source>
    </source>
</evidence>
<evidence type="ECO:0000269" key="5">
    <source>
    </source>
</evidence>
<evidence type="ECO:0000269" key="6">
    <source>
    </source>
</evidence>
<evidence type="ECO:0000269" key="7">
    <source>
    </source>
</evidence>
<evidence type="ECO:0000269" key="8">
    <source>
    </source>
</evidence>
<evidence type="ECO:0000269" key="9">
    <source>
    </source>
</evidence>
<evidence type="ECO:0000269" key="10">
    <source>
    </source>
</evidence>
<evidence type="ECO:0000269" key="11">
    <source>
    </source>
</evidence>
<evidence type="ECO:0000269" key="12">
    <source>
    </source>
</evidence>
<evidence type="ECO:0000269" key="13">
    <source>
    </source>
</evidence>
<evidence type="ECO:0000303" key="14">
    <source>
    </source>
</evidence>
<evidence type="ECO:0000303" key="15">
    <source>
    </source>
</evidence>
<evidence type="ECO:0000305" key="16"/>
<evidence type="ECO:0000305" key="17">
    <source>
    </source>
</evidence>
<evidence type="ECO:0000305" key="18">
    <source>
    </source>
</evidence>
<evidence type="ECO:0000305" key="19">
    <source>
    </source>
</evidence>
<evidence type="ECO:0000312" key="20">
    <source>
        <dbReference type="HGNC" id="HGNC:26033"/>
    </source>
</evidence>
<evidence type="ECO:0007744" key="21">
    <source>
        <dbReference type="PDB" id="5KKP"/>
    </source>
</evidence>
<evidence type="ECO:0007744" key="22">
    <source>
    </source>
</evidence>
<evidence type="ECO:0007744" key="23">
    <source>
    </source>
</evidence>
<evidence type="ECO:0007744" key="24">
    <source>
    </source>
</evidence>
<evidence type="ECO:0007744" key="25">
    <source>
    </source>
</evidence>
<evidence type="ECO:0007829" key="26">
    <source>
        <dbReference type="PDB" id="5KKP"/>
    </source>
</evidence>
<gene>
    <name evidence="15 20" type="primary">PUS7</name>
    <name evidence="14" type="synonym">KIAA1897</name>
</gene>
<reference key="1">
    <citation type="journal article" date="2003" name="Nature">
        <title>The DNA sequence of human chromosome 7.</title>
        <authorList>
            <person name="Hillier L.W."/>
            <person name="Fulton R.S."/>
            <person name="Fulton L.A."/>
            <person name="Graves T.A."/>
            <person name="Pepin K.H."/>
            <person name="Wagner-McPherson C."/>
            <person name="Layman D."/>
            <person name="Maas J."/>
            <person name="Jaeger S."/>
            <person name="Walker R."/>
            <person name="Wylie K."/>
            <person name="Sekhon M."/>
            <person name="Becker M.C."/>
            <person name="O'Laughlin M.D."/>
            <person name="Schaller M.E."/>
            <person name="Fewell G.A."/>
            <person name="Delehaunty K.D."/>
            <person name="Miner T.L."/>
            <person name="Nash W.E."/>
            <person name="Cordes M."/>
            <person name="Du H."/>
            <person name="Sun H."/>
            <person name="Edwards J."/>
            <person name="Bradshaw-Cordum H."/>
            <person name="Ali J."/>
            <person name="Andrews S."/>
            <person name="Isak A."/>
            <person name="Vanbrunt A."/>
            <person name="Nguyen C."/>
            <person name="Du F."/>
            <person name="Lamar B."/>
            <person name="Courtney L."/>
            <person name="Kalicki J."/>
            <person name="Ozersky P."/>
            <person name="Bielicki L."/>
            <person name="Scott K."/>
            <person name="Holmes A."/>
            <person name="Harkins R."/>
            <person name="Harris A."/>
            <person name="Strong C.M."/>
            <person name="Hou S."/>
            <person name="Tomlinson C."/>
            <person name="Dauphin-Kohlberg S."/>
            <person name="Kozlowicz-Reilly A."/>
            <person name="Leonard S."/>
            <person name="Rohlfing T."/>
            <person name="Rock S.M."/>
            <person name="Tin-Wollam A.-M."/>
            <person name="Abbott A."/>
            <person name="Minx P."/>
            <person name="Maupin R."/>
            <person name="Strowmatt C."/>
            <person name="Latreille P."/>
            <person name="Miller N."/>
            <person name="Johnson D."/>
            <person name="Murray J."/>
            <person name="Woessner J.P."/>
            <person name="Wendl M.C."/>
            <person name="Yang S.-P."/>
            <person name="Schultz B.R."/>
            <person name="Wallis J.W."/>
            <person name="Spieth J."/>
            <person name="Bieri T.A."/>
            <person name="Nelson J.O."/>
            <person name="Berkowicz N."/>
            <person name="Wohldmann P.E."/>
            <person name="Cook L.L."/>
            <person name="Hickenbotham M.T."/>
            <person name="Eldred J."/>
            <person name="Williams D."/>
            <person name="Bedell J.A."/>
            <person name="Mardis E.R."/>
            <person name="Clifton S.W."/>
            <person name="Chissoe S.L."/>
            <person name="Marra M.A."/>
            <person name="Raymond C."/>
            <person name="Haugen E."/>
            <person name="Gillett W."/>
            <person name="Zhou Y."/>
            <person name="James R."/>
            <person name="Phelps K."/>
            <person name="Iadanoto S."/>
            <person name="Bubb K."/>
            <person name="Simms E."/>
            <person name="Levy R."/>
            <person name="Clendenning J."/>
            <person name="Kaul R."/>
            <person name="Kent W.J."/>
            <person name="Furey T.S."/>
            <person name="Baertsch R.A."/>
            <person name="Brent M.R."/>
            <person name="Keibler E."/>
            <person name="Flicek P."/>
            <person name="Bork P."/>
            <person name="Suyama M."/>
            <person name="Bailey J.A."/>
            <person name="Portnoy M.E."/>
            <person name="Torrents D."/>
            <person name="Chinwalla A.T."/>
            <person name="Gish W.R."/>
            <person name="Eddy S.R."/>
            <person name="McPherson J.D."/>
            <person name="Olson M.V."/>
            <person name="Eichler E.E."/>
            <person name="Green E.D."/>
            <person name="Waterston R.H."/>
            <person name="Wilson R.K."/>
        </authorList>
    </citation>
    <scope>NUCLEOTIDE SEQUENCE [LARGE SCALE GENOMIC DNA]</scope>
</reference>
<reference key="2">
    <citation type="journal article" date="2004" name="Genome Res.">
        <title>The status, quality, and expansion of the NIH full-length cDNA project: the Mammalian Gene Collection (MGC).</title>
        <authorList>
            <consortium name="The MGC Project Team"/>
        </authorList>
    </citation>
    <scope>NUCLEOTIDE SEQUENCE [LARGE SCALE MRNA]</scope>
    <source>
        <tissue>Eye</tissue>
        <tissue>Urinary bladder</tissue>
    </source>
</reference>
<reference key="3">
    <citation type="journal article" date="2001" name="DNA Res.">
        <title>Prediction of the coding sequences of unidentified human genes. XXI. The complete sequences of 60 new cDNA clones from brain which code for large proteins.</title>
        <authorList>
            <person name="Nagase T."/>
            <person name="Kikuno R."/>
            <person name="Ohara O."/>
        </authorList>
    </citation>
    <scope>NUCLEOTIDE SEQUENCE [LARGE SCALE MRNA] OF 23-661 (ISOFORM 2)</scope>
    <source>
        <tissue>Brain</tissue>
    </source>
</reference>
<reference key="4">
    <citation type="journal article" date="2004" name="Nat. Genet.">
        <title>Complete sequencing and characterization of 21,243 full-length human cDNAs.</title>
        <authorList>
            <person name="Ota T."/>
            <person name="Suzuki Y."/>
            <person name="Nishikawa T."/>
            <person name="Otsuki T."/>
            <person name="Sugiyama T."/>
            <person name="Irie R."/>
            <person name="Wakamatsu A."/>
            <person name="Hayashi K."/>
            <person name="Sato H."/>
            <person name="Nagai K."/>
            <person name="Kimura K."/>
            <person name="Makita H."/>
            <person name="Sekine M."/>
            <person name="Obayashi M."/>
            <person name="Nishi T."/>
            <person name="Shibahara T."/>
            <person name="Tanaka T."/>
            <person name="Ishii S."/>
            <person name="Yamamoto J."/>
            <person name="Saito K."/>
            <person name="Kawai Y."/>
            <person name="Isono Y."/>
            <person name="Nakamura Y."/>
            <person name="Nagahari K."/>
            <person name="Murakami K."/>
            <person name="Yasuda T."/>
            <person name="Iwayanagi T."/>
            <person name="Wagatsuma M."/>
            <person name="Shiratori A."/>
            <person name="Sudo H."/>
            <person name="Hosoiri T."/>
            <person name="Kaku Y."/>
            <person name="Kodaira H."/>
            <person name="Kondo H."/>
            <person name="Sugawara M."/>
            <person name="Takahashi M."/>
            <person name="Kanda K."/>
            <person name="Yokoi T."/>
            <person name="Furuya T."/>
            <person name="Kikkawa E."/>
            <person name="Omura Y."/>
            <person name="Abe K."/>
            <person name="Kamihara K."/>
            <person name="Katsuta N."/>
            <person name="Sato K."/>
            <person name="Tanikawa M."/>
            <person name="Yamazaki M."/>
            <person name="Ninomiya K."/>
            <person name="Ishibashi T."/>
            <person name="Yamashita H."/>
            <person name="Murakawa K."/>
            <person name="Fujimori K."/>
            <person name="Tanai H."/>
            <person name="Kimata M."/>
            <person name="Watanabe M."/>
            <person name="Hiraoka S."/>
            <person name="Chiba Y."/>
            <person name="Ishida S."/>
            <person name="Ono Y."/>
            <person name="Takiguchi S."/>
            <person name="Watanabe S."/>
            <person name="Yosida M."/>
            <person name="Hotuta T."/>
            <person name="Kusano J."/>
            <person name="Kanehori K."/>
            <person name="Takahashi-Fujii A."/>
            <person name="Hara H."/>
            <person name="Tanase T.-O."/>
            <person name="Nomura Y."/>
            <person name="Togiya S."/>
            <person name="Komai F."/>
            <person name="Hara R."/>
            <person name="Takeuchi K."/>
            <person name="Arita M."/>
            <person name="Imose N."/>
            <person name="Musashino K."/>
            <person name="Yuuki H."/>
            <person name="Oshima A."/>
            <person name="Sasaki N."/>
            <person name="Aotsuka S."/>
            <person name="Yoshikawa Y."/>
            <person name="Matsunawa H."/>
            <person name="Ichihara T."/>
            <person name="Shiohata N."/>
            <person name="Sano S."/>
            <person name="Moriya S."/>
            <person name="Momiyama H."/>
            <person name="Satoh N."/>
            <person name="Takami S."/>
            <person name="Terashima Y."/>
            <person name="Suzuki O."/>
            <person name="Nakagawa S."/>
            <person name="Senoh A."/>
            <person name="Mizoguchi H."/>
            <person name="Goto Y."/>
            <person name="Shimizu F."/>
            <person name="Wakebe H."/>
            <person name="Hishigaki H."/>
            <person name="Watanabe T."/>
            <person name="Sugiyama A."/>
            <person name="Takemoto M."/>
            <person name="Kawakami B."/>
            <person name="Yamazaki M."/>
            <person name="Watanabe K."/>
            <person name="Kumagai A."/>
            <person name="Itakura S."/>
            <person name="Fukuzumi Y."/>
            <person name="Fujimori Y."/>
            <person name="Komiyama M."/>
            <person name="Tashiro H."/>
            <person name="Tanigami A."/>
            <person name="Fujiwara T."/>
            <person name="Ono T."/>
            <person name="Yamada K."/>
            <person name="Fujii Y."/>
            <person name="Ozaki K."/>
            <person name="Hirao M."/>
            <person name="Ohmori Y."/>
            <person name="Kawabata A."/>
            <person name="Hikiji T."/>
            <person name="Kobatake N."/>
            <person name="Inagaki H."/>
            <person name="Ikema Y."/>
            <person name="Okamoto S."/>
            <person name="Okitani R."/>
            <person name="Kawakami T."/>
            <person name="Noguchi S."/>
            <person name="Itoh T."/>
            <person name="Shigeta K."/>
            <person name="Senba T."/>
            <person name="Matsumura K."/>
            <person name="Nakajima Y."/>
            <person name="Mizuno T."/>
            <person name="Morinaga M."/>
            <person name="Sasaki M."/>
            <person name="Togashi T."/>
            <person name="Oyama M."/>
            <person name="Hata H."/>
            <person name="Watanabe M."/>
            <person name="Komatsu T."/>
            <person name="Mizushima-Sugano J."/>
            <person name="Satoh T."/>
            <person name="Shirai Y."/>
            <person name="Takahashi Y."/>
            <person name="Nakagawa K."/>
            <person name="Okumura K."/>
            <person name="Nagase T."/>
            <person name="Nomura N."/>
            <person name="Kikuchi H."/>
            <person name="Masuho Y."/>
            <person name="Yamashita R."/>
            <person name="Nakai K."/>
            <person name="Yada T."/>
            <person name="Nakamura Y."/>
            <person name="Ohara O."/>
            <person name="Isogai T."/>
            <person name="Sugano S."/>
        </authorList>
    </citation>
    <scope>NUCLEOTIDE SEQUENCE [LARGE SCALE MRNA] OF 420-661</scope>
</reference>
<reference key="5">
    <citation type="journal article" date="2009" name="Anal. Chem.">
        <title>Lys-N and trypsin cover complementary parts of the phosphoproteome in a refined SCX-based approach.</title>
        <authorList>
            <person name="Gauci S."/>
            <person name="Helbig A.O."/>
            <person name="Slijper M."/>
            <person name="Krijgsveld J."/>
            <person name="Heck A.J."/>
            <person name="Mohammed S."/>
        </authorList>
    </citation>
    <scope>ACETYLATION [LARGE SCALE ANALYSIS] AT MET-1</scope>
    <scope>IDENTIFICATION BY MASS SPECTROMETRY [LARGE SCALE ANALYSIS]</scope>
</reference>
<reference key="6">
    <citation type="journal article" date="2009" name="Sci. Signal.">
        <title>Quantitative phosphoproteomic analysis of T cell receptor signaling reveals system-wide modulation of protein-protein interactions.</title>
        <authorList>
            <person name="Mayya V."/>
            <person name="Lundgren D.H."/>
            <person name="Hwang S.-I."/>
            <person name="Rezaul K."/>
            <person name="Wu L."/>
            <person name="Eng J.K."/>
            <person name="Rodionov V."/>
            <person name="Han D.K."/>
        </authorList>
    </citation>
    <scope>PHOSPHORYLATION [LARGE SCALE ANALYSIS] AT THR-610</scope>
    <scope>IDENTIFICATION BY MASS SPECTROMETRY [LARGE SCALE ANALYSIS]</scope>
    <source>
        <tissue>Leukemic T-cell</tissue>
    </source>
</reference>
<reference key="7">
    <citation type="journal article" date="2011" name="BMC Syst. Biol.">
        <title>Initial characterization of the human central proteome.</title>
        <authorList>
            <person name="Burkard T.R."/>
            <person name="Planyavsky M."/>
            <person name="Kaupe I."/>
            <person name="Breitwieser F.P."/>
            <person name="Buerckstuemmer T."/>
            <person name="Bennett K.L."/>
            <person name="Superti-Furga G."/>
            <person name="Colinge J."/>
        </authorList>
    </citation>
    <scope>IDENTIFICATION BY MASS SPECTROMETRY [LARGE SCALE ANALYSIS]</scope>
</reference>
<reference key="8">
    <citation type="journal article" date="2012" name="Proc. Natl. Acad. Sci. U.S.A.">
        <title>N-terminal acetylome analyses and functional insights of the N-terminal acetyltransferase NatB.</title>
        <authorList>
            <person name="Van Damme P."/>
            <person name="Lasa M."/>
            <person name="Polevoda B."/>
            <person name="Gazquez C."/>
            <person name="Elosegui-Artola A."/>
            <person name="Kim D.S."/>
            <person name="De Juan-Pardo E."/>
            <person name="Demeyer K."/>
            <person name="Hole K."/>
            <person name="Larrea E."/>
            <person name="Timmerman E."/>
            <person name="Prieto J."/>
            <person name="Arnesen T."/>
            <person name="Sherman F."/>
            <person name="Gevaert K."/>
            <person name="Aldabe R."/>
        </authorList>
    </citation>
    <scope>ACETYLATION [LARGE SCALE ANALYSIS] AT MET-1</scope>
    <scope>IDENTIFICATION BY MASS SPECTROMETRY [LARGE SCALE ANALYSIS]</scope>
</reference>
<reference key="9">
    <citation type="journal article" date="2013" name="J. Proteome Res.">
        <title>Toward a comprehensive characterization of a human cancer cell phosphoproteome.</title>
        <authorList>
            <person name="Zhou H."/>
            <person name="Di Palma S."/>
            <person name="Preisinger C."/>
            <person name="Peng M."/>
            <person name="Polat A.N."/>
            <person name="Heck A.J."/>
            <person name="Mohammed S."/>
        </authorList>
    </citation>
    <scope>PHOSPHORYLATION [LARGE SCALE ANALYSIS] AT SER-10; SER-127 AND THR-610</scope>
    <scope>IDENTIFICATION BY MASS SPECTROMETRY [LARGE SCALE ANALYSIS]</scope>
    <source>
        <tissue>Erythroleukemia</tissue>
    </source>
</reference>
<reference key="10">
    <citation type="journal article" date="2017" name="Genome Res.">
        <title>TRUB1 is the predominant pseudouridine synthase acting on mammalian mRNA via a predictable and conserved code.</title>
        <authorList>
            <person name="Safra M."/>
            <person name="Nir R."/>
            <person name="Farouq D."/>
            <person name="Vainberg Slutskin I."/>
            <person name="Schwartz S."/>
        </authorList>
    </citation>
    <scope>FUNCTION</scope>
    <scope>CATALYTIC ACTIVITY</scope>
</reference>
<reference key="11">
    <citation type="journal article" date="2018" name="Cell">
        <title>Pseudouridylation of tRNA-derived fragments steers translational control in stem cells.</title>
        <authorList>
            <person name="Guzzi N."/>
            <person name="Ciesla M."/>
            <person name="Ngoc P.C.T."/>
            <person name="Lang S."/>
            <person name="Arora S."/>
            <person name="Dimitriou M."/>
            <person name="Pimkova K."/>
            <person name="Sommarin M.N.E."/>
            <person name="Munita R."/>
            <person name="Lubas M."/>
            <person name="Lim Y."/>
            <person name="Okuyama K."/>
            <person name="Soneji S."/>
            <person name="Karlsson G."/>
            <person name="Hansson J."/>
            <person name="Joensson G."/>
            <person name="Lund A.H."/>
            <person name="Sigvardsson M."/>
            <person name="Hellstroem-Lindberg E."/>
            <person name="Hsieh A.C."/>
            <person name="Bellodi C."/>
        </authorList>
    </citation>
    <scope>FUNCTION</scope>
    <scope>CATALYTIC ACTIVITY</scope>
    <scope>ACTIVE SITE</scope>
    <scope>SUBCELLULAR LOCATION</scope>
    <scope>MUTAGENESIS OF ASP-294</scope>
</reference>
<reference key="12">
    <citation type="journal article" date="2018" name="Am. J. Hum. Genet.">
        <title>Variants in PUS7 cause intellectual disability with speech delay, microcephaly, short stature, and aggressive behavior.</title>
        <authorList>
            <person name="de Brouwer A.P.M."/>
            <person name="Abou Jamra R."/>
            <person name="Koertel N."/>
            <person name="Soyris C."/>
            <person name="Polla D.L."/>
            <person name="Safra M."/>
            <person name="Zisso A."/>
            <person name="Powell C.A."/>
            <person name="Rebelo-Guiomar P."/>
            <person name="Dinges N."/>
            <person name="Morin V."/>
            <person name="Stock M."/>
            <person name="Hussain M."/>
            <person name="Shahzad M."/>
            <person name="Riazuddin S."/>
            <person name="Ahmed Z.M."/>
            <person name="Pfundt R."/>
            <person name="Schwarz F."/>
            <person name="de Boer L."/>
            <person name="Reis A."/>
            <person name="Grozeva D."/>
            <person name="Raymond F.L."/>
            <person name="Riazuddin S."/>
            <person name="Koolen D.A."/>
            <person name="Minczuk M."/>
            <person name="Roignant J.Y."/>
            <person name="van Bokhoven H."/>
            <person name="Schwartz S."/>
        </authorList>
    </citation>
    <scope>INVOLVEMENT IN IDDABS</scope>
    <scope>VARIANT IDDABS 450-ARG--ARG-661 DEL</scope>
</reference>
<reference key="13">
    <citation type="journal article" date="2019" name="Biochem. Biophys. Res. Commun.">
        <title>Biochemical insight into pseudouridine synthase 7 (PUS7) as a novel interactor of sirtuin, SIRT1.</title>
        <authorList>
            <person name="Dalal S."/>
            <person name="Deshmukh P."/>
            <person name="Unni S."/>
            <person name="Padavattan S."/>
            <person name="Padmanabhan B."/>
        </authorList>
    </citation>
    <scope>INTERACTION WITH SIRT1</scope>
</reference>
<reference key="14">
    <citation type="journal article" date="2019" name="Hum. Genet.">
        <title>PUS7 mutations impair pseudouridylation in humans and cause intellectual disability and microcephaly.</title>
        <authorList>
            <person name="Shaheen R."/>
            <person name="Tasak M."/>
            <person name="Maddirevula S."/>
            <person name="Abdel-Salam G.M.H."/>
            <person name="Sayed I.S.M."/>
            <person name="Alazami A.M."/>
            <person name="Al-Sheddi T."/>
            <person name="Alobeid E."/>
            <person name="Phizicky E.M."/>
            <person name="Alkuraya F.S."/>
        </authorList>
    </citation>
    <scope>FUNCTION</scope>
    <scope>INVOLVEMENT IN IDDABS</scope>
    <scope>VARIANT IDDABS TYR-503</scope>
    <scope>CHARACTERIZATION OF VARIANT IDDABS TYR-503</scope>
</reference>
<reference key="15">
    <citation type="journal article" date="2019" name="Nat. Chem. Biol.">
        <title>mRNA structure determines modification by pseudouridine synthase 1.</title>
        <authorList>
            <person name="Carlile T.M."/>
            <person name="Martinez N.M."/>
            <person name="Schaening C."/>
            <person name="Su A."/>
            <person name="Bell T.A."/>
            <person name="Zinshteyn B."/>
            <person name="Gilbert W.V."/>
        </authorList>
    </citation>
    <scope>FUNCTION</scope>
    <scope>CATALYTIC ACTIVITY</scope>
</reference>
<reference key="16">
    <citation type="journal article" date="2019" name="Neurol. Genet.">
        <title>A novel PUS7 mutation causes intellectual disability with autistic and aggressive behaviors.</title>
        <authorList>
            <person name="Darvish H."/>
            <person name="Azcona L.J."/>
            <person name="Alehabib E."/>
            <person name="Jamali F."/>
            <person name="Tafakhori A."/>
            <person name="Ranji-Burachaloo S."/>
            <person name="Jen J.C."/>
            <person name="Paisan-Ruiz C."/>
        </authorList>
    </citation>
    <scope>VARIANT IDDABS ARG-128</scope>
</reference>
<reference key="17">
    <citation type="journal article" date="2020" name="Saudi J. Biol. Sci.">
        <title>Next generation sequencing reveals novel homozygous frameshift in PUS7 and splice acceptor variants in AASS gene leading to intellectual disability, developmental delay, dysmorphic feature and microcephaly.</title>
        <authorList>
            <person name="Naseer M.I."/>
            <person name="Abdulkareem A.A."/>
            <person name="Jan M.M."/>
            <person name="Chaudhary A.G."/>
            <person name="Alharazy S."/>
            <person name="AlQahtani M.H."/>
        </authorList>
    </citation>
    <scope>INVOLVEMENT IN IDDABS</scope>
</reference>
<reference key="18">
    <citation type="journal article" date="2022" name="Mol. Cell">
        <title>Pseudouridine synthases modify human pre-mRNA co-transcriptionally and affect pre-mRNA processing.</title>
        <authorList>
            <person name="Martinez N.M."/>
            <person name="Su A."/>
            <person name="Burns M.C."/>
            <person name="Nussbacher J.K."/>
            <person name="Schaening C."/>
            <person name="Sathe S."/>
            <person name="Yeo G.W."/>
            <person name="Gilbert W.V."/>
        </authorList>
    </citation>
    <scope>FUNCTION</scope>
    <scope>CATALYTIC ACTIVITY</scope>
</reference>
<reference key="19">
    <citation type="journal article" date="2022" name="Mol. Genet. Metab.">
        <title>PUS7 deficiency in human patients causes profound neurodevelopmental phenotype by dysregulating protein translation.</title>
        <authorList>
            <person name="Han S.T."/>
            <person name="Kim A.C."/>
            <person name="Garcia K."/>
            <person name="Schimmenti L.A."/>
            <person name="Macnamara E."/>
            <person name="Network U.D."/>
            <person name="Gahl W.A."/>
            <person name="Malicdan M.C."/>
            <person name="Tifft C.J."/>
        </authorList>
    </citation>
    <scope>VARIANT IDDABS MET-387</scope>
    <scope>SUBCELLULAR LOCATION</scope>
</reference>
<reference evidence="21" key="20">
    <citation type="journal article" date="2021" name="Nucleic Acids Res.">
        <title>The human pseudouridine synthase PUS7 recognizes RNA with an extended multi-domain binding surface.</title>
        <authorList>
            <person name="Guegueniat J."/>
            <person name="Halabelian L."/>
            <person name="Zeng H."/>
            <person name="Dong A."/>
            <person name="Li Y."/>
            <person name="Wu H."/>
            <person name="Arrowsmith C.H."/>
            <person name="Kothe U."/>
        </authorList>
    </citation>
    <scope>X-RAY CRYSTALLOGRAPHY (2.26 ANGSTROMS) OF 99-661</scope>
    <scope>FUNCTION</scope>
    <scope>CATALYTIC ACTIVITY</scope>
    <scope>ACTIVE SITE</scope>
    <scope>MUTAGENESIS OF ASP-294</scope>
    <scope>CHARACTERIZATION OF VARIANT IDDABS ARG-128</scope>
</reference>
<comment type="function">
    <text evidence="3 4 6 8 11 12">Pseudouridylate synthase that catalyzes pseudouridylation of RNAs (PubMed:28073919, PubMed:29628141, PubMed:30778726, PubMed:31477916, PubMed:34718722, PubMed:35051350). Acts as a regulator of protein synthesis in embryonic stem cells by mediating pseudouridylation of RNA fragments derived from tRNAs (tRFs): pseudouridylated tRFs inhibit translation by targeting the translation initiation complex (PubMed:29628141). Also catalyzes pseudouridylation of mRNAs: mediates pseudouridylation of mRNAs with the consensus sequence 5'-UGUAG-3' (PubMed:28073919, PubMed:31477916, PubMed:35051350). Acts as a regulator of pre-mRNA splicing by mediating pseudouridylation of pre-mRNAs at locations associated with alternatively spliced regions (PubMed:35051350). Pseudouridylation of pre-mRNAs near splice sites directly regulates mRNA splicing and mRNA 3'-end processing (PubMed:35051350). In addition to mRNAs and tRNAs, binds other types of RNAs, such as snRNAs, Y RNAs and vault RNAs, suggesting that it can catalyze pseudouridylation of many RNA types (PubMed:29628141).</text>
</comment>
<comment type="catalytic activity">
    <reaction evidence="4 11">
        <text>a uridine in tRNA = a pseudouridine in tRNA</text>
        <dbReference type="Rhea" id="RHEA:54572"/>
        <dbReference type="Rhea" id="RHEA-COMP:13339"/>
        <dbReference type="Rhea" id="RHEA-COMP:13934"/>
        <dbReference type="ChEBI" id="CHEBI:65314"/>
        <dbReference type="ChEBI" id="CHEBI:65315"/>
    </reaction>
</comment>
<comment type="catalytic activity">
    <reaction evidence="11">
        <text>uridine(13) in tRNA = pseudouridine(13) in tRNA</text>
        <dbReference type="Rhea" id="RHEA:42540"/>
        <dbReference type="Rhea" id="RHEA-COMP:10105"/>
        <dbReference type="Rhea" id="RHEA-COMP:10106"/>
        <dbReference type="ChEBI" id="CHEBI:65314"/>
        <dbReference type="ChEBI" id="CHEBI:65315"/>
    </reaction>
</comment>
<comment type="catalytic activity">
    <reaction evidence="8 12 17">
        <text>a uridine in mRNA = a pseudouridine in mRNA</text>
        <dbReference type="Rhea" id="RHEA:56644"/>
        <dbReference type="Rhea" id="RHEA-COMP:14658"/>
        <dbReference type="Rhea" id="RHEA-COMP:14659"/>
        <dbReference type="ChEBI" id="CHEBI:65314"/>
        <dbReference type="ChEBI" id="CHEBI:65315"/>
    </reaction>
</comment>
<comment type="subunit">
    <text evidence="7">Interacts with SIRT1.</text>
</comment>
<comment type="subcellular location">
    <subcellularLocation>
        <location evidence="4 13">Nucleus</location>
    </subcellularLocation>
</comment>
<comment type="alternative products">
    <event type="alternative splicing"/>
    <isoform>
        <id>Q96PZ0-1</id>
        <name>1</name>
        <sequence type="displayed"/>
    </isoform>
    <isoform>
        <id>Q96PZ0-2</id>
        <name>2</name>
        <sequence type="described" ref="VSP_059620"/>
    </isoform>
</comment>
<comment type="disease" evidence="5 6 9 10 11 13">
    <disease id="DI-05504">
        <name>Intellectual developmental disorder with abnormal behavior, microcephaly, and short stature</name>
        <acronym>IDDABS</acronym>
        <description>An autosomal recessive disorder characterized by intellectual disability, developmental delay with poor or absent speech, short stature, progressive microcephaly, hyperactivity and aggressive behavior. Some patients manifest sensorineural hearing loss.</description>
        <dbReference type="MIM" id="618342"/>
    </disease>
    <text>The disease is caused by variants affecting the gene represented in this entry.</text>
</comment>
<comment type="similarity">
    <text evidence="16">Belongs to the pseudouridine synthase TruD family.</text>
</comment>
<comment type="sequence caution" evidence="16">
    <conflict type="erroneous initiation">
        <sequence resource="EMBL-CDS" id="BAA91203"/>
    </conflict>
    <text>Truncated N-terminus.</text>
</comment>
<organism>
    <name type="scientific">Homo sapiens</name>
    <name type="common">Human</name>
    <dbReference type="NCBI Taxonomy" id="9606"/>
    <lineage>
        <taxon>Eukaryota</taxon>
        <taxon>Metazoa</taxon>
        <taxon>Chordata</taxon>
        <taxon>Craniata</taxon>
        <taxon>Vertebrata</taxon>
        <taxon>Euteleostomi</taxon>
        <taxon>Mammalia</taxon>
        <taxon>Eutheria</taxon>
        <taxon>Euarchontoglires</taxon>
        <taxon>Primates</taxon>
        <taxon>Haplorrhini</taxon>
        <taxon>Catarrhini</taxon>
        <taxon>Hominidae</taxon>
        <taxon>Homo</taxon>
    </lineage>
</organism>
<dbReference type="EC" id="5.4.99.-" evidence="4 8 11 12 17"/>
<dbReference type="EMBL" id="AC073138">
    <property type="protein sequence ID" value="AAS07447.1"/>
    <property type="molecule type" value="Genomic_DNA"/>
</dbReference>
<dbReference type="EMBL" id="AC074013">
    <property type="status" value="NOT_ANNOTATED_CDS"/>
    <property type="molecule type" value="Genomic_DNA"/>
</dbReference>
<dbReference type="EMBL" id="BC005209">
    <property type="protein sequence ID" value="AAH05209.3"/>
    <property type="molecule type" value="mRNA"/>
</dbReference>
<dbReference type="EMBL" id="BC011396">
    <property type="protein sequence ID" value="AAH11396.2"/>
    <property type="molecule type" value="mRNA"/>
</dbReference>
<dbReference type="EMBL" id="AB067484">
    <property type="protein sequence ID" value="BAB67790.1"/>
    <property type="molecule type" value="mRNA"/>
</dbReference>
<dbReference type="EMBL" id="AK000492">
    <property type="protein sequence ID" value="BAA91203.1"/>
    <property type="status" value="ALT_INIT"/>
    <property type="molecule type" value="mRNA"/>
</dbReference>
<dbReference type="CCDS" id="CCDS34725.1">
    <molecule id="Q96PZ0-1"/>
</dbReference>
<dbReference type="RefSeq" id="NP_001305092.1">
    <molecule id="Q96PZ0-2"/>
    <property type="nucleotide sequence ID" value="NM_001318163.1"/>
</dbReference>
<dbReference type="RefSeq" id="NP_001305093.1">
    <molecule id="Q96PZ0-1"/>
    <property type="nucleotide sequence ID" value="NM_001318164.2"/>
</dbReference>
<dbReference type="RefSeq" id="NP_061915.2">
    <molecule id="Q96PZ0-1"/>
    <property type="nucleotide sequence ID" value="NM_019042.4"/>
</dbReference>
<dbReference type="RefSeq" id="XP_005250519.1">
    <molecule id="Q96PZ0-2"/>
    <property type="nucleotide sequence ID" value="XM_005250462.5"/>
</dbReference>
<dbReference type="RefSeq" id="XP_016867856.1">
    <molecule id="Q96PZ0-2"/>
    <property type="nucleotide sequence ID" value="XM_017012367.3"/>
</dbReference>
<dbReference type="RefSeq" id="XP_054214480.1">
    <molecule id="Q96PZ0-2"/>
    <property type="nucleotide sequence ID" value="XM_054358505.1"/>
</dbReference>
<dbReference type="RefSeq" id="XP_054214481.1">
    <molecule id="Q96PZ0-2"/>
    <property type="nucleotide sequence ID" value="XM_054358506.1"/>
</dbReference>
<dbReference type="PDB" id="5KKP">
    <property type="method" value="X-ray"/>
    <property type="resolution" value="2.26 A"/>
    <property type="chains" value="A=99-661"/>
</dbReference>
<dbReference type="PDBsum" id="5KKP"/>
<dbReference type="SMR" id="Q96PZ0"/>
<dbReference type="BioGRID" id="120011">
    <property type="interactions" value="153"/>
</dbReference>
<dbReference type="FunCoup" id="Q96PZ0">
    <property type="interactions" value="2257"/>
</dbReference>
<dbReference type="IntAct" id="Q96PZ0">
    <property type="interactions" value="75"/>
</dbReference>
<dbReference type="STRING" id="9606.ENSP00000417402"/>
<dbReference type="GlyGen" id="Q96PZ0">
    <property type="glycosylation" value="1 site, 1 O-linked glycan (1 site)"/>
</dbReference>
<dbReference type="iPTMnet" id="Q96PZ0"/>
<dbReference type="MetOSite" id="Q96PZ0"/>
<dbReference type="PhosphoSitePlus" id="Q96PZ0"/>
<dbReference type="BioMuta" id="PUS7"/>
<dbReference type="DMDM" id="37090412"/>
<dbReference type="jPOST" id="Q96PZ0"/>
<dbReference type="MassIVE" id="Q96PZ0"/>
<dbReference type="PaxDb" id="9606-ENSP00000348722"/>
<dbReference type="PeptideAtlas" id="Q96PZ0"/>
<dbReference type="ProteomicsDB" id="77793"/>
<dbReference type="Pumba" id="Q96PZ0"/>
<dbReference type="Antibodypedia" id="17076">
    <property type="antibodies" value="134 antibodies from 19 providers"/>
</dbReference>
<dbReference type="DNASU" id="54517"/>
<dbReference type="Ensembl" id="ENST00000356362.6">
    <molecule id="Q96PZ0-1"/>
    <property type="protein sequence ID" value="ENSP00000348722.2"/>
    <property type="gene ID" value="ENSG00000091127.14"/>
</dbReference>
<dbReference type="Ensembl" id="ENST00000469408.6">
    <molecule id="Q96PZ0-1"/>
    <property type="protein sequence ID" value="ENSP00000417402.1"/>
    <property type="gene ID" value="ENSG00000091127.14"/>
</dbReference>
<dbReference type="GeneID" id="54517"/>
<dbReference type="KEGG" id="hsa:54517"/>
<dbReference type="MANE-Select" id="ENST00000469408.6">
    <property type="protein sequence ID" value="ENSP00000417402.1"/>
    <property type="RefSeq nucleotide sequence ID" value="NM_019042.5"/>
    <property type="RefSeq protein sequence ID" value="NP_061915.2"/>
</dbReference>
<dbReference type="UCSC" id="uc003vcx.5">
    <molecule id="Q96PZ0-1"/>
    <property type="organism name" value="human"/>
</dbReference>
<dbReference type="AGR" id="HGNC:26033"/>
<dbReference type="CTD" id="54517"/>
<dbReference type="DisGeNET" id="54517"/>
<dbReference type="GeneCards" id="PUS7"/>
<dbReference type="HGNC" id="HGNC:26033">
    <property type="gene designation" value="PUS7"/>
</dbReference>
<dbReference type="HPA" id="ENSG00000091127">
    <property type="expression patterns" value="Low tissue specificity"/>
</dbReference>
<dbReference type="MalaCards" id="PUS7"/>
<dbReference type="MIM" id="616261">
    <property type="type" value="gene"/>
</dbReference>
<dbReference type="MIM" id="618342">
    <property type="type" value="phenotype"/>
</dbReference>
<dbReference type="neXtProt" id="NX_Q96PZ0"/>
<dbReference type="OpenTargets" id="ENSG00000091127"/>
<dbReference type="Orphanet" id="528084">
    <property type="disease" value="Non-specific syndromic intellectual disability"/>
</dbReference>
<dbReference type="PharmGKB" id="PA143485587"/>
<dbReference type="VEuPathDB" id="HostDB:ENSG00000091127"/>
<dbReference type="eggNOG" id="KOG2339">
    <property type="taxonomic scope" value="Eukaryota"/>
</dbReference>
<dbReference type="GeneTree" id="ENSGT00530000063554"/>
<dbReference type="HOGENOM" id="CLU_005281_0_1_1"/>
<dbReference type="InParanoid" id="Q96PZ0"/>
<dbReference type="OMA" id="WINYFGH"/>
<dbReference type="OrthoDB" id="447290at2759"/>
<dbReference type="PAN-GO" id="Q96PZ0">
    <property type="GO annotations" value="3 GO annotations based on evolutionary models"/>
</dbReference>
<dbReference type="PhylomeDB" id="Q96PZ0"/>
<dbReference type="TreeFam" id="TF314278"/>
<dbReference type="BRENDA" id="5.4.99.27">
    <property type="organism ID" value="2681"/>
</dbReference>
<dbReference type="PathwayCommons" id="Q96PZ0"/>
<dbReference type="Reactome" id="R-HSA-6782315">
    <property type="pathway name" value="tRNA modification in the nucleus and cytosol"/>
</dbReference>
<dbReference type="SignaLink" id="Q96PZ0"/>
<dbReference type="BioGRID-ORCS" id="54517">
    <property type="hits" value="23 hits in 1159 CRISPR screens"/>
</dbReference>
<dbReference type="ChiTaRS" id="PUS7">
    <property type="organism name" value="human"/>
</dbReference>
<dbReference type="GenomeRNAi" id="54517"/>
<dbReference type="Pharos" id="Q96PZ0">
    <property type="development level" value="Tbio"/>
</dbReference>
<dbReference type="PRO" id="PR:Q96PZ0"/>
<dbReference type="Proteomes" id="UP000005640">
    <property type="component" value="Chromosome 7"/>
</dbReference>
<dbReference type="RNAct" id="Q96PZ0">
    <property type="molecule type" value="protein"/>
</dbReference>
<dbReference type="Bgee" id="ENSG00000091127">
    <property type="expression patterns" value="Expressed in buccal mucosa cell and 169 other cell types or tissues"/>
</dbReference>
<dbReference type="ExpressionAtlas" id="Q96PZ0">
    <property type="expression patterns" value="baseline and differential"/>
</dbReference>
<dbReference type="GO" id="GO:0005634">
    <property type="term" value="C:nucleus"/>
    <property type="evidence" value="ECO:0000314"/>
    <property type="project" value="UniProtKB"/>
</dbReference>
<dbReference type="GO" id="GO:0019899">
    <property type="term" value="F:enzyme binding"/>
    <property type="evidence" value="ECO:0000353"/>
    <property type="project" value="UniProtKB"/>
</dbReference>
<dbReference type="GO" id="GO:0009982">
    <property type="term" value="F:pseudouridine synthase activity"/>
    <property type="evidence" value="ECO:0000314"/>
    <property type="project" value="UniProtKB"/>
</dbReference>
<dbReference type="GO" id="GO:0003723">
    <property type="term" value="F:RNA binding"/>
    <property type="evidence" value="ECO:0007005"/>
    <property type="project" value="UniProtKB"/>
</dbReference>
<dbReference type="GO" id="GO:0160150">
    <property type="term" value="F:tRNA pseudouridine(13) synthase activity"/>
    <property type="evidence" value="ECO:0000314"/>
    <property type="project" value="UniProtKB"/>
</dbReference>
<dbReference type="GO" id="GO:0006397">
    <property type="term" value="P:mRNA processing"/>
    <property type="evidence" value="ECO:0007669"/>
    <property type="project" value="UniProtKB-KW"/>
</dbReference>
<dbReference type="GO" id="GO:1990481">
    <property type="term" value="P:mRNA pseudouridine synthesis"/>
    <property type="evidence" value="ECO:0000314"/>
    <property type="project" value="UniProtKB"/>
</dbReference>
<dbReference type="GO" id="GO:0017148">
    <property type="term" value="P:negative regulation of translation"/>
    <property type="evidence" value="ECO:0000314"/>
    <property type="project" value="UniProtKB"/>
</dbReference>
<dbReference type="GO" id="GO:0001522">
    <property type="term" value="P:pseudouridine synthesis"/>
    <property type="evidence" value="ECO:0000318"/>
    <property type="project" value="GO_Central"/>
</dbReference>
<dbReference type="GO" id="GO:1902036">
    <property type="term" value="P:regulation of hematopoietic stem cell differentiation"/>
    <property type="evidence" value="ECO:0000315"/>
    <property type="project" value="UniProtKB"/>
</dbReference>
<dbReference type="GO" id="GO:2000380">
    <property type="term" value="P:regulation of mesoderm development"/>
    <property type="evidence" value="ECO:0000315"/>
    <property type="project" value="UniProtKB"/>
</dbReference>
<dbReference type="GO" id="GO:0008380">
    <property type="term" value="P:RNA splicing"/>
    <property type="evidence" value="ECO:0007669"/>
    <property type="project" value="UniProtKB-KW"/>
</dbReference>
<dbReference type="GO" id="GO:0031119">
    <property type="term" value="P:tRNA pseudouridine synthesis"/>
    <property type="evidence" value="ECO:0000314"/>
    <property type="project" value="UniProtKB"/>
</dbReference>
<dbReference type="CDD" id="cd02576">
    <property type="entry name" value="PseudoU_synth_ScPUS7"/>
    <property type="match status" value="1"/>
</dbReference>
<dbReference type="FunFam" id="3.30.2350.20:FF:000002">
    <property type="entry name" value="Pseudouridylate synthase 7 homolog"/>
    <property type="match status" value="1"/>
</dbReference>
<dbReference type="FunFam" id="3.30.2350.20:FF:000003">
    <property type="entry name" value="Pseudouridylate synthase 7 homolog"/>
    <property type="match status" value="1"/>
</dbReference>
<dbReference type="Gene3D" id="3.30.2350.20">
    <property type="entry name" value="TruD, catalytic domain"/>
    <property type="match status" value="2"/>
</dbReference>
<dbReference type="InterPro" id="IPR020103">
    <property type="entry name" value="PsdUridine_synth_cat_dom_sf"/>
</dbReference>
<dbReference type="InterPro" id="IPR001656">
    <property type="entry name" value="PsdUridine_synth_TruD"/>
</dbReference>
<dbReference type="InterPro" id="IPR020119">
    <property type="entry name" value="PsdUridine_synth_TruD_CS"/>
</dbReference>
<dbReference type="InterPro" id="IPR011760">
    <property type="entry name" value="PsdUridine_synth_TruD_insert"/>
</dbReference>
<dbReference type="InterPro" id="IPR042214">
    <property type="entry name" value="TruD_catalytic"/>
</dbReference>
<dbReference type="NCBIfam" id="TIGR00094">
    <property type="entry name" value="tRNA_TruD_broad"/>
    <property type="match status" value="1"/>
</dbReference>
<dbReference type="PANTHER" id="PTHR13326:SF31">
    <property type="entry name" value="PSEUDOURIDYLATE SYNTHASE 7 HOMOLOG"/>
    <property type="match status" value="1"/>
</dbReference>
<dbReference type="PANTHER" id="PTHR13326">
    <property type="entry name" value="TRNA PSEUDOURIDINE SYNTHASE D"/>
    <property type="match status" value="1"/>
</dbReference>
<dbReference type="Pfam" id="PF01142">
    <property type="entry name" value="TruD"/>
    <property type="match status" value="1"/>
</dbReference>
<dbReference type="PIRSF" id="PIRSF037016">
    <property type="entry name" value="Pseudouridin_synth_euk_prd"/>
    <property type="match status" value="1"/>
</dbReference>
<dbReference type="SUPFAM" id="SSF55120">
    <property type="entry name" value="Pseudouridine synthase"/>
    <property type="match status" value="1"/>
</dbReference>
<dbReference type="PROSITE" id="PS50984">
    <property type="entry name" value="TRUD"/>
    <property type="match status" value="1"/>
</dbReference>
<dbReference type="PROSITE" id="PS01268">
    <property type="entry name" value="UPF0024"/>
    <property type="match status" value="1"/>
</dbReference>
<feature type="chain" id="PRO_0000152558" description="Pseudouridylate synthase 7 homolog">
    <location>
        <begin position="1"/>
        <end position="661"/>
    </location>
</feature>
<feature type="domain" description="TRUD" evidence="1">
    <location>
        <begin position="370"/>
        <end position="580"/>
    </location>
</feature>
<feature type="region of interest" description="Disordered" evidence="2">
    <location>
        <begin position="1"/>
        <end position="97"/>
    </location>
</feature>
<feature type="compositionally biased region" description="Polar residues" evidence="2">
    <location>
        <begin position="36"/>
        <end position="52"/>
    </location>
</feature>
<feature type="compositionally biased region" description="Acidic residues" evidence="2">
    <location>
        <begin position="77"/>
        <end position="97"/>
    </location>
</feature>
<feature type="active site" description="Nucleophile" evidence="18 19">
    <location>
        <position position="294"/>
    </location>
</feature>
<feature type="modified residue" description="N-acetylmethionine" evidence="22 24">
    <location>
        <position position="1"/>
    </location>
</feature>
<feature type="modified residue" description="Phosphoserine" evidence="25">
    <location>
        <position position="10"/>
    </location>
</feature>
<feature type="modified residue" description="Phosphoserine" evidence="25">
    <location>
        <position position="127"/>
    </location>
</feature>
<feature type="modified residue" description="Phosphothreonine" evidence="23 25">
    <location>
        <position position="610"/>
    </location>
</feature>
<feature type="splice variant" id="VSP_059620" description="In isoform 2.">
    <original>N</original>
    <variation>KVRTAAD</variation>
    <location>
        <position position="244"/>
    </location>
</feature>
<feature type="sequence variant" id="VAR_086160" description="In IDDABS; uncertain significance; mild phenotype; decreased pseudouridylate synthase activity." evidence="9 11">
    <original>G</original>
    <variation>R</variation>
    <location>
        <position position="128"/>
    </location>
</feature>
<feature type="sequence variant" id="VAR_086161" description="In IDDABS; uncertain significance." evidence="13">
    <original>T</original>
    <variation>M</variation>
    <location>
        <position position="387"/>
    </location>
</feature>
<feature type="sequence variant" id="VAR_082041" description="In IDDABS." evidence="5">
    <location>
        <begin position="450"/>
        <end position="661"/>
    </location>
</feature>
<feature type="sequence variant" id="VAR_082042" description="In IDDABS; decreased pseudouridylate synthase activity." evidence="6">
    <original>D</original>
    <variation>Y</variation>
    <location>
        <position position="503"/>
    </location>
</feature>
<feature type="mutagenesis site" description="Loss of pseudouridylate synthase activity." evidence="4 11">
    <original>D</original>
    <variation>A</variation>
    <location>
        <position position="294"/>
    </location>
</feature>
<feature type="helix" evidence="26">
    <location>
        <begin position="112"/>
        <end position="114"/>
    </location>
</feature>
<feature type="strand" evidence="26">
    <location>
        <begin position="129"/>
        <end position="133"/>
    </location>
</feature>
<feature type="helix" evidence="26">
    <location>
        <begin position="134"/>
        <end position="136"/>
    </location>
</feature>
<feature type="strand" evidence="26">
    <location>
        <begin position="137"/>
        <end position="142"/>
    </location>
</feature>
<feature type="helix" evidence="26">
    <location>
        <begin position="166"/>
        <end position="177"/>
    </location>
</feature>
<feature type="strand" evidence="26">
    <location>
        <begin position="192"/>
        <end position="195"/>
    </location>
</feature>
<feature type="helix" evidence="26">
    <location>
        <begin position="201"/>
        <end position="213"/>
    </location>
</feature>
<feature type="strand" evidence="26">
    <location>
        <begin position="219"/>
        <end position="225"/>
    </location>
</feature>
<feature type="strand" evidence="26">
    <location>
        <begin position="228"/>
        <end position="234"/>
    </location>
</feature>
<feature type="strand" evidence="26">
    <location>
        <begin position="256"/>
        <end position="266"/>
    </location>
</feature>
<feature type="helix" evidence="26">
    <location>
        <begin position="269"/>
        <end position="280"/>
    </location>
</feature>
<feature type="helix" evidence="26">
    <location>
        <begin position="284"/>
        <end position="286"/>
    </location>
</feature>
<feature type="strand" evidence="26">
    <location>
        <begin position="287"/>
        <end position="290"/>
    </location>
</feature>
<feature type="strand" evidence="26">
    <location>
        <begin position="295"/>
        <end position="306"/>
    </location>
</feature>
<feature type="helix" evidence="26">
    <location>
        <begin position="310"/>
        <end position="315"/>
    </location>
</feature>
<feature type="helix" evidence="26">
    <location>
        <begin position="316"/>
        <end position="319"/>
    </location>
</feature>
<feature type="strand" evidence="26">
    <location>
        <begin position="321"/>
        <end position="333"/>
    </location>
</feature>
<feature type="strand" evidence="26">
    <location>
        <begin position="342"/>
        <end position="351"/>
    </location>
</feature>
<feature type="helix" evidence="26">
    <location>
        <begin position="356"/>
        <end position="368"/>
    </location>
</feature>
<feature type="helix" evidence="26">
    <location>
        <begin position="377"/>
        <end position="380"/>
    </location>
</feature>
<feature type="helix" evidence="26">
    <location>
        <begin position="387"/>
        <end position="395"/>
    </location>
</feature>
<feature type="helix" evidence="26">
    <location>
        <begin position="399"/>
        <end position="407"/>
    </location>
</feature>
<feature type="helix" evidence="26">
    <location>
        <begin position="416"/>
        <end position="428"/>
    </location>
</feature>
<feature type="helix" evidence="26">
    <location>
        <begin position="431"/>
        <end position="435"/>
    </location>
</feature>
<feature type="strand" evidence="26">
    <location>
        <begin position="441"/>
        <end position="443"/>
    </location>
</feature>
<feature type="helix" evidence="26">
    <location>
        <begin position="444"/>
        <end position="455"/>
    </location>
</feature>
<feature type="helix" evidence="26">
    <location>
        <begin position="460"/>
        <end position="464"/>
    </location>
</feature>
<feature type="helix" evidence="26">
    <location>
        <begin position="469"/>
        <end position="495"/>
    </location>
</feature>
<feature type="strand" evidence="26">
    <location>
        <begin position="504"/>
        <end position="507"/>
    </location>
</feature>
<feature type="strand" evidence="26">
    <location>
        <begin position="510"/>
        <end position="513"/>
    </location>
</feature>
<feature type="strand" evidence="26">
    <location>
        <begin position="516"/>
        <end position="518"/>
    </location>
</feature>
<feature type="helix" evidence="26">
    <location>
        <begin position="519"/>
        <end position="521"/>
    </location>
</feature>
<feature type="helix" evidence="26">
    <location>
        <begin position="524"/>
        <end position="526"/>
    </location>
</feature>
<feature type="strand" evidence="26">
    <location>
        <begin position="527"/>
        <end position="531"/>
    </location>
</feature>
<feature type="strand" evidence="26">
    <location>
        <begin position="533"/>
        <end position="535"/>
    </location>
</feature>
<feature type="helix" evidence="26">
    <location>
        <begin position="543"/>
        <end position="553"/>
    </location>
</feature>
<feature type="helix" evidence="26">
    <location>
        <begin position="566"/>
        <end position="568"/>
    </location>
</feature>
<feature type="strand" evidence="26">
    <location>
        <begin position="573"/>
        <end position="579"/>
    </location>
</feature>
<feature type="strand" evidence="26">
    <location>
        <begin position="582"/>
        <end position="592"/>
    </location>
</feature>
<feature type="helix" evidence="26">
    <location>
        <begin position="602"/>
        <end position="607"/>
    </location>
</feature>
<feature type="strand" evidence="26">
    <location>
        <begin position="619"/>
        <end position="629"/>
    </location>
</feature>
<feature type="helix" evidence="26">
    <location>
        <begin position="635"/>
        <end position="643"/>
    </location>
</feature>
<accession>Q96PZ0</accession>
<accession>Q75MG4</accession>
<accession>Q9NX19</accession>
<name>PUS7_HUMAN</name>
<protein>
    <recommendedName>
        <fullName evidence="16">Pseudouridylate synthase 7 homolog</fullName>
        <ecNumber evidence="4 8 11 12 17">5.4.99.-</ecNumber>
    </recommendedName>
</protein>
<keyword id="KW-0002">3D-structure</keyword>
<keyword id="KW-0007">Acetylation</keyword>
<keyword id="KW-0025">Alternative splicing</keyword>
<keyword id="KW-0225">Disease variant</keyword>
<keyword id="KW-0242">Dwarfism</keyword>
<keyword id="KW-0991">Intellectual disability</keyword>
<keyword id="KW-0413">Isomerase</keyword>
<keyword id="KW-0507">mRNA processing</keyword>
<keyword id="KW-0508">mRNA splicing</keyword>
<keyword id="KW-0539">Nucleus</keyword>
<keyword id="KW-0597">Phosphoprotein</keyword>
<keyword id="KW-1267">Proteomics identification</keyword>
<keyword id="KW-1185">Reference proteome</keyword>
<keyword id="KW-0819">tRNA processing</keyword>